<feature type="chain" id="PRO_0000454037" description="Xylan O-acetyltransferase 14">
    <location>
        <begin position="1"/>
        <end position="473"/>
    </location>
</feature>
<feature type="topological domain" description="Cytoplasmic" evidence="9">
    <location>
        <begin position="1"/>
        <end position="54"/>
    </location>
</feature>
<feature type="transmembrane region" description="Helical; Signal-anchor for type II membrane protein" evidence="3">
    <location>
        <begin position="55"/>
        <end position="75"/>
    </location>
</feature>
<feature type="topological domain" description="Lumenal" evidence="9">
    <location>
        <begin position="76"/>
        <end position="473"/>
    </location>
</feature>
<feature type="region of interest" description="Disordered" evidence="5">
    <location>
        <begin position="1"/>
        <end position="22"/>
    </location>
</feature>
<feature type="region of interest" description="Disordered" evidence="5">
    <location>
        <begin position="76"/>
        <end position="101"/>
    </location>
</feature>
<feature type="short sequence motif" description="GDS motif" evidence="10">
    <location>
        <begin position="182"/>
        <end position="184"/>
    </location>
</feature>
<feature type="short sequence motif" description="DXXH motif" evidence="10">
    <location>
        <begin position="450"/>
        <end position="453"/>
    </location>
</feature>
<feature type="compositionally biased region" description="Polar residues" evidence="5">
    <location>
        <begin position="1"/>
        <end position="17"/>
    </location>
</feature>
<feature type="active site" description="Nucleophile" evidence="2">
    <location>
        <position position="184"/>
    </location>
</feature>
<feature type="active site" description="Proton donor" evidence="2">
    <location>
        <position position="450"/>
    </location>
</feature>
<feature type="active site" description="Proton acceptor" evidence="2">
    <location>
        <position position="453"/>
    </location>
</feature>
<feature type="glycosylation site" description="N-linked (GlcNAc...) asparagine" evidence="4">
    <location>
        <position position="209"/>
    </location>
</feature>
<feature type="glycosylation site" description="N-linked (GlcNAc...) asparagine" evidence="4">
    <location>
        <position position="223"/>
    </location>
</feature>
<feature type="glycosylation site" description="N-linked (GlcNAc...) asparagine" evidence="4">
    <location>
        <position position="414"/>
    </location>
</feature>
<feature type="disulfide bond" evidence="2">
    <location>
        <begin position="108"/>
        <end position="159"/>
    </location>
</feature>
<feature type="disulfide bond" evidence="2">
    <location>
        <begin position="130"/>
        <end position="195"/>
    </location>
</feature>
<feature type="disulfide bond" evidence="2">
    <location>
        <begin position="139"/>
        <end position="455"/>
    </location>
</feature>
<feature type="disulfide bond" evidence="2">
    <location>
        <begin position="370"/>
        <end position="451"/>
    </location>
</feature>
<feature type="sequence conflict" description="In Ref. 6; EAZ29061." evidence="9" ref="6">
    <original>P</original>
    <variation>H</variation>
    <location>
        <position position="84"/>
    </location>
</feature>
<reference key="1">
    <citation type="journal article" date="2018" name="Planta">
        <title>Biochemical characterization of rice xylan O-acetyltransferases.</title>
        <authorList>
            <person name="Zhong R."/>
            <person name="Cui D."/>
            <person name="Dasher R.L."/>
            <person name="Ye Z.H."/>
        </authorList>
    </citation>
    <scope>NUCLEOTIDE SEQUENCE [MRNA]</scope>
    <scope>FUNCTION</scope>
    <scope>CATALYTIC ACTIVITY</scope>
    <scope>BIOPHYSICOCHEMICAL PROPERTIES</scope>
</reference>
<reference key="2">
    <citation type="journal article" date="2005" name="Genome Res.">
        <title>Sequence, annotation, and analysis of synteny between rice chromosome 3 and diverged grass species.</title>
        <authorList>
            <consortium name="The rice chromosome 3 sequencing consortium"/>
            <person name="Buell C.R."/>
            <person name="Yuan Q."/>
            <person name="Ouyang S."/>
            <person name="Liu J."/>
            <person name="Zhu W."/>
            <person name="Wang A."/>
            <person name="Maiti R."/>
            <person name="Haas B."/>
            <person name="Wortman J."/>
            <person name="Pertea M."/>
            <person name="Jones K.M."/>
            <person name="Kim M."/>
            <person name="Overton L."/>
            <person name="Tsitrin T."/>
            <person name="Fadrosh D."/>
            <person name="Bera J."/>
            <person name="Weaver B."/>
            <person name="Jin S."/>
            <person name="Johri S."/>
            <person name="Reardon M."/>
            <person name="Webb K."/>
            <person name="Hill J."/>
            <person name="Moffat K."/>
            <person name="Tallon L."/>
            <person name="Van Aken S."/>
            <person name="Lewis M."/>
            <person name="Utterback T."/>
            <person name="Feldblyum T."/>
            <person name="Zismann V."/>
            <person name="Iobst S."/>
            <person name="Hsiao J."/>
            <person name="de Vazeille A.R."/>
            <person name="Salzberg S.L."/>
            <person name="White O."/>
            <person name="Fraser C.M."/>
            <person name="Yu Y."/>
            <person name="Kim H."/>
            <person name="Rambo T."/>
            <person name="Currie J."/>
            <person name="Collura K."/>
            <person name="Kernodle-Thompson S."/>
            <person name="Wei F."/>
            <person name="Kudrna K."/>
            <person name="Ammiraju J.S.S."/>
            <person name="Luo M."/>
            <person name="Goicoechea J.L."/>
            <person name="Wing R.A."/>
            <person name="Henry D."/>
            <person name="Oates R."/>
            <person name="Palmer M."/>
            <person name="Pries G."/>
            <person name="Saski C."/>
            <person name="Simmons J."/>
            <person name="Soderlund C."/>
            <person name="Nelson W."/>
            <person name="de la Bastide M."/>
            <person name="Spiegel L."/>
            <person name="Nascimento L."/>
            <person name="Huang E."/>
            <person name="Preston R."/>
            <person name="Zutavern T."/>
            <person name="Palmer L."/>
            <person name="O'Shaughnessy A."/>
            <person name="Dike S."/>
            <person name="McCombie W.R."/>
            <person name="Minx P."/>
            <person name="Cordum H."/>
            <person name="Wilson R."/>
            <person name="Jin W."/>
            <person name="Lee H.R."/>
            <person name="Jiang J."/>
            <person name="Jackson S."/>
        </authorList>
    </citation>
    <scope>NUCLEOTIDE SEQUENCE [LARGE SCALE GENOMIC DNA]</scope>
    <source>
        <strain>cv. Nipponbare</strain>
    </source>
</reference>
<reference key="3">
    <citation type="journal article" date="2005" name="Nature">
        <title>The map-based sequence of the rice genome.</title>
        <authorList>
            <consortium name="International rice genome sequencing project (IRGSP)"/>
        </authorList>
    </citation>
    <scope>NUCLEOTIDE SEQUENCE [LARGE SCALE GENOMIC DNA]</scope>
    <source>
        <strain>cv. Nipponbare</strain>
    </source>
</reference>
<reference key="4">
    <citation type="journal article" date="2008" name="Nucleic Acids Res.">
        <title>The rice annotation project database (RAP-DB): 2008 update.</title>
        <authorList>
            <consortium name="The rice annotation project (RAP)"/>
        </authorList>
    </citation>
    <scope>GENOME REANNOTATION</scope>
    <source>
        <strain>cv. Nipponbare</strain>
    </source>
</reference>
<reference key="5">
    <citation type="journal article" date="2013" name="Rice">
        <title>Improvement of the Oryza sativa Nipponbare reference genome using next generation sequence and optical map data.</title>
        <authorList>
            <person name="Kawahara Y."/>
            <person name="de la Bastide M."/>
            <person name="Hamilton J.P."/>
            <person name="Kanamori H."/>
            <person name="McCombie W.R."/>
            <person name="Ouyang S."/>
            <person name="Schwartz D.C."/>
            <person name="Tanaka T."/>
            <person name="Wu J."/>
            <person name="Zhou S."/>
            <person name="Childs K.L."/>
            <person name="Davidson R.M."/>
            <person name="Lin H."/>
            <person name="Quesada-Ocampo L."/>
            <person name="Vaillancourt B."/>
            <person name="Sakai H."/>
            <person name="Lee S.S."/>
            <person name="Kim J."/>
            <person name="Numa H."/>
            <person name="Itoh T."/>
            <person name="Buell C.R."/>
            <person name="Matsumoto T."/>
        </authorList>
    </citation>
    <scope>GENOME REANNOTATION</scope>
    <source>
        <strain>cv. Nipponbare</strain>
    </source>
</reference>
<reference key="6">
    <citation type="journal article" date="2005" name="PLoS Biol.">
        <title>The genomes of Oryza sativa: a history of duplications.</title>
        <authorList>
            <person name="Yu J."/>
            <person name="Wang J."/>
            <person name="Lin W."/>
            <person name="Li S."/>
            <person name="Li H."/>
            <person name="Zhou J."/>
            <person name="Ni P."/>
            <person name="Dong W."/>
            <person name="Hu S."/>
            <person name="Zeng C."/>
            <person name="Zhang J."/>
            <person name="Zhang Y."/>
            <person name="Li R."/>
            <person name="Xu Z."/>
            <person name="Li S."/>
            <person name="Li X."/>
            <person name="Zheng H."/>
            <person name="Cong L."/>
            <person name="Lin L."/>
            <person name="Yin J."/>
            <person name="Geng J."/>
            <person name="Li G."/>
            <person name="Shi J."/>
            <person name="Liu J."/>
            <person name="Lv H."/>
            <person name="Li J."/>
            <person name="Wang J."/>
            <person name="Deng Y."/>
            <person name="Ran L."/>
            <person name="Shi X."/>
            <person name="Wang X."/>
            <person name="Wu Q."/>
            <person name="Li C."/>
            <person name="Ren X."/>
            <person name="Wang J."/>
            <person name="Wang X."/>
            <person name="Li D."/>
            <person name="Liu D."/>
            <person name="Zhang X."/>
            <person name="Ji Z."/>
            <person name="Zhao W."/>
            <person name="Sun Y."/>
            <person name="Zhang Z."/>
            <person name="Bao J."/>
            <person name="Han Y."/>
            <person name="Dong L."/>
            <person name="Ji J."/>
            <person name="Chen P."/>
            <person name="Wu S."/>
            <person name="Liu J."/>
            <person name="Xiao Y."/>
            <person name="Bu D."/>
            <person name="Tan J."/>
            <person name="Yang L."/>
            <person name="Ye C."/>
            <person name="Zhang J."/>
            <person name="Xu J."/>
            <person name="Zhou Y."/>
            <person name="Yu Y."/>
            <person name="Zhang B."/>
            <person name="Zhuang S."/>
            <person name="Wei H."/>
            <person name="Liu B."/>
            <person name="Lei M."/>
            <person name="Yu H."/>
            <person name="Li Y."/>
            <person name="Xu H."/>
            <person name="Wei S."/>
            <person name="He X."/>
            <person name="Fang L."/>
            <person name="Zhang Z."/>
            <person name="Zhang Y."/>
            <person name="Huang X."/>
            <person name="Su Z."/>
            <person name="Tong W."/>
            <person name="Li J."/>
            <person name="Tong Z."/>
            <person name="Li S."/>
            <person name="Ye J."/>
            <person name="Wang L."/>
            <person name="Fang L."/>
            <person name="Lei T."/>
            <person name="Chen C.-S."/>
            <person name="Chen H.-C."/>
            <person name="Xu Z."/>
            <person name="Li H."/>
            <person name="Huang H."/>
            <person name="Zhang F."/>
            <person name="Xu H."/>
            <person name="Li N."/>
            <person name="Zhao C."/>
            <person name="Li S."/>
            <person name="Dong L."/>
            <person name="Huang Y."/>
            <person name="Li L."/>
            <person name="Xi Y."/>
            <person name="Qi Q."/>
            <person name="Li W."/>
            <person name="Zhang B."/>
            <person name="Hu W."/>
            <person name="Zhang Y."/>
            <person name="Tian X."/>
            <person name="Jiao Y."/>
            <person name="Liang X."/>
            <person name="Jin J."/>
            <person name="Gao L."/>
            <person name="Zheng W."/>
            <person name="Hao B."/>
            <person name="Liu S.-M."/>
            <person name="Wang W."/>
            <person name="Yuan L."/>
            <person name="Cao M."/>
            <person name="McDermott J."/>
            <person name="Samudrala R."/>
            <person name="Wang J."/>
            <person name="Wong G.K.-S."/>
            <person name="Yang H."/>
        </authorList>
    </citation>
    <scope>NUCLEOTIDE SEQUENCE [LARGE SCALE GENOMIC DNA]</scope>
    <source>
        <strain>cv. Nipponbare</strain>
    </source>
</reference>
<reference key="7">
    <citation type="journal article" date="2003" name="Science">
        <title>Collection, mapping, and annotation of over 28,000 cDNA clones from japonica rice.</title>
        <authorList>
            <consortium name="The rice full-length cDNA consortium"/>
        </authorList>
    </citation>
    <scope>NUCLEOTIDE SEQUENCE [LARGE SCALE MRNA]</scope>
    <source>
        <strain>cv. Nipponbare</strain>
    </source>
</reference>
<reference key="8">
    <citation type="journal article" date="2017" name="Plant Physiol.">
        <title>Two trichome birefringence-like proteins mediate xylan acetylation, which is essential for leaf blight resistance in rice.</title>
        <authorList>
            <person name="Gao Y."/>
            <person name="He C."/>
            <person name="Zhang D."/>
            <person name="Liu X."/>
            <person name="Xu Z."/>
            <person name="Tian Y."/>
            <person name="Liu X.H."/>
            <person name="Zang S."/>
            <person name="Pauly M."/>
            <person name="Zhou Y."/>
            <person name="Zhang B."/>
        </authorList>
    </citation>
    <scope>GENE FAMILY</scope>
    <scope>NOMENCLATURE</scope>
</reference>
<protein>
    <recommendedName>
        <fullName evidence="8">Xylan O-acetyltransferase 14</fullName>
        <ecNumber evidence="6">2.3.1.-</ecNumber>
    </recommendedName>
    <alternativeName>
        <fullName evidence="7">Protein trichome birefringence-like 3</fullName>
        <shortName evidence="7">OsTBL3</shortName>
    </alternativeName>
</protein>
<evidence type="ECO:0000250" key="1">
    <source>
        <dbReference type="UniProtKB" id="Q2QYU2"/>
    </source>
</evidence>
<evidence type="ECO:0000250" key="2">
    <source>
        <dbReference type="UniProtKB" id="Q9LY46"/>
    </source>
</evidence>
<evidence type="ECO:0000255" key="3"/>
<evidence type="ECO:0000255" key="4">
    <source>
        <dbReference type="PROSITE-ProRule" id="PRU00498"/>
    </source>
</evidence>
<evidence type="ECO:0000256" key="5">
    <source>
        <dbReference type="SAM" id="MobiDB-lite"/>
    </source>
</evidence>
<evidence type="ECO:0000269" key="6">
    <source>
    </source>
</evidence>
<evidence type="ECO:0000303" key="7">
    <source>
    </source>
</evidence>
<evidence type="ECO:0000303" key="8">
    <source>
    </source>
</evidence>
<evidence type="ECO:0000305" key="9"/>
<evidence type="ECO:0000305" key="10">
    <source>
    </source>
</evidence>
<evidence type="ECO:0000312" key="11">
    <source>
        <dbReference type="EMBL" id="AAO60038.1"/>
    </source>
</evidence>
<evidence type="ECO:0000312" key="12">
    <source>
        <dbReference type="EMBL" id="BAS87055.1"/>
    </source>
</evidence>
<evidence type="ECO:0000312" key="13">
    <source>
        <dbReference type="EMBL" id="EAZ29061.1"/>
    </source>
</evidence>
<gene>
    <name evidence="8" type="primary">XOAT14</name>
    <name evidence="7" type="synonym">TBL3</name>
    <name evidence="12" type="ordered locus">Os03g0817500</name>
    <name type="ordered locus">LOC_Os03g60300</name>
    <name evidence="13" type="ORF">OsJ_13115</name>
    <name evidence="11" type="ORF">OSJNBa0094J08.14</name>
</gene>
<accession>Q84TV3</accession>
<accession>A3AP22</accession>
<accession>Q0DMC3</accession>
<dbReference type="EC" id="2.3.1.-" evidence="6"/>
<dbReference type="EMBL" id="MH037028">
    <property type="protein sequence ID" value="AVR54518.1"/>
    <property type="molecule type" value="mRNA"/>
</dbReference>
<dbReference type="EMBL" id="AC133007">
    <property type="protein sequence ID" value="AAO60038.1"/>
    <property type="molecule type" value="Genomic_DNA"/>
</dbReference>
<dbReference type="EMBL" id="DP000009">
    <property type="protein sequence ID" value="ABF99558.1"/>
    <property type="molecule type" value="Genomic_DNA"/>
</dbReference>
<dbReference type="EMBL" id="AP008209">
    <property type="protein sequence ID" value="BAF13615.1"/>
    <property type="molecule type" value="Genomic_DNA"/>
</dbReference>
<dbReference type="EMBL" id="AP014959">
    <property type="protein sequence ID" value="BAS87055.1"/>
    <property type="molecule type" value="Genomic_DNA"/>
</dbReference>
<dbReference type="EMBL" id="CM000140">
    <property type="protein sequence ID" value="EAZ29061.1"/>
    <property type="molecule type" value="Genomic_DNA"/>
</dbReference>
<dbReference type="EMBL" id="AK111450">
    <property type="protein sequence ID" value="BAG99262.1"/>
    <property type="molecule type" value="mRNA"/>
</dbReference>
<dbReference type="RefSeq" id="XP_015629847.1">
    <property type="nucleotide sequence ID" value="XM_015774361.1"/>
</dbReference>
<dbReference type="SMR" id="Q84TV3"/>
<dbReference type="FunCoup" id="Q84TV3">
    <property type="interactions" value="47"/>
</dbReference>
<dbReference type="GlyCosmos" id="Q84TV3">
    <property type="glycosylation" value="3 sites, No reported glycans"/>
</dbReference>
<dbReference type="PaxDb" id="39947-Q84TV3"/>
<dbReference type="EnsemblPlants" id="Os03t0817500-01">
    <property type="protein sequence ID" value="Os03t0817500-01"/>
    <property type="gene ID" value="Os03g0817500"/>
</dbReference>
<dbReference type="Gramene" id="Os03t0817500-01">
    <property type="protein sequence ID" value="Os03t0817500-01"/>
    <property type="gene ID" value="Os03g0817500"/>
</dbReference>
<dbReference type="KEGG" id="dosa:Os03g0817500"/>
<dbReference type="eggNOG" id="ENOG502QTH8">
    <property type="taxonomic scope" value="Eukaryota"/>
</dbReference>
<dbReference type="HOGENOM" id="CLU_020953_3_1_1"/>
<dbReference type="InParanoid" id="Q84TV3"/>
<dbReference type="OMA" id="LFFMTMS"/>
<dbReference type="OrthoDB" id="2016263at2759"/>
<dbReference type="Proteomes" id="UP000000763">
    <property type="component" value="Chromosome 3"/>
</dbReference>
<dbReference type="Proteomes" id="UP000007752">
    <property type="component" value="Chromosome 3"/>
</dbReference>
<dbReference type="Proteomes" id="UP000059680">
    <property type="component" value="Chromosome 3"/>
</dbReference>
<dbReference type="GO" id="GO:0005794">
    <property type="term" value="C:Golgi apparatus"/>
    <property type="evidence" value="ECO:0000318"/>
    <property type="project" value="GO_Central"/>
</dbReference>
<dbReference type="GO" id="GO:0000139">
    <property type="term" value="C:Golgi membrane"/>
    <property type="evidence" value="ECO:0000250"/>
    <property type="project" value="UniProtKB"/>
</dbReference>
<dbReference type="GO" id="GO:0016413">
    <property type="term" value="F:O-acetyltransferase activity"/>
    <property type="evidence" value="ECO:0000318"/>
    <property type="project" value="GO_Central"/>
</dbReference>
<dbReference type="GO" id="GO:1990538">
    <property type="term" value="F:xylan O-acetyltransferase activity"/>
    <property type="evidence" value="ECO:0000314"/>
    <property type="project" value="UniProtKB"/>
</dbReference>
<dbReference type="GO" id="GO:1990937">
    <property type="term" value="P:xylan acetylation"/>
    <property type="evidence" value="ECO:0000314"/>
    <property type="project" value="UniProtKB"/>
</dbReference>
<dbReference type="InterPro" id="IPR029962">
    <property type="entry name" value="TBL"/>
</dbReference>
<dbReference type="InterPro" id="IPR026057">
    <property type="entry name" value="TBL_C"/>
</dbReference>
<dbReference type="InterPro" id="IPR025846">
    <property type="entry name" value="TBL_N"/>
</dbReference>
<dbReference type="PANTHER" id="PTHR32285:SF11">
    <property type="entry name" value="PROTEIN TRICHOME BIREFRINGENCE-LIKE 34"/>
    <property type="match status" value="1"/>
</dbReference>
<dbReference type="PANTHER" id="PTHR32285">
    <property type="entry name" value="PROTEIN TRICHOME BIREFRINGENCE-LIKE 9-RELATED"/>
    <property type="match status" value="1"/>
</dbReference>
<dbReference type="Pfam" id="PF13839">
    <property type="entry name" value="PC-Esterase"/>
    <property type="match status" value="1"/>
</dbReference>
<dbReference type="Pfam" id="PF14416">
    <property type="entry name" value="PMR5N"/>
    <property type="match status" value="1"/>
</dbReference>
<organism>
    <name type="scientific">Oryza sativa subsp. japonica</name>
    <name type="common">Rice</name>
    <dbReference type="NCBI Taxonomy" id="39947"/>
    <lineage>
        <taxon>Eukaryota</taxon>
        <taxon>Viridiplantae</taxon>
        <taxon>Streptophyta</taxon>
        <taxon>Embryophyta</taxon>
        <taxon>Tracheophyta</taxon>
        <taxon>Spermatophyta</taxon>
        <taxon>Magnoliopsida</taxon>
        <taxon>Liliopsida</taxon>
        <taxon>Poales</taxon>
        <taxon>Poaceae</taxon>
        <taxon>BOP clade</taxon>
        <taxon>Oryzoideae</taxon>
        <taxon>Oryzeae</taxon>
        <taxon>Oryzinae</taxon>
        <taxon>Oryza</taxon>
        <taxon>Oryza sativa</taxon>
    </lineage>
</organism>
<proteinExistence type="evidence at protein level"/>
<sequence length="473" mass="52821">MTTTGSTPPRKNRSNVTGGEGGSLEEYAWRAAGEAAAAKKATRAWGVSVSLRSHFSSLVLLLLLLLVALAVSATTKNGDPAETPHAPPLPPPASIKLPSSSSSGGGECDLFSGRWVYDEAAYPLYRESACRVMSEQSACEKYGRTDLRYQHWRWQPHGCDLPRFDAEKFLGKLRNKRLVFVGDSLNRNQWASMLCLIDTGAPELHTSINSSRSLTTFKIHEYNASVDFYWSPLLVESNSDHPLRHRVADRTVRAASINKHAAHWTNADVLVFNSYLWWQRPAMKVLWGSFDNPAAVVAAAAEEGDEYAVSKVIDSLRAYELAVRTWADWMEFHVDRARTQLFFMTMSPTHLRSDEWEDAAAAAAGGNHGCYGETEPIAAEEYRGTSGTDMAFARAVEAEARRLGERSVAVRLINVTRLSERRKDAHPSVHRRYWDPVTDEQRRNPSSYADCIHWCLPGVPDVWNQLLYAHIVS</sequence>
<name>XOATE_ORYSJ</name>
<keyword id="KW-1015">Disulfide bond</keyword>
<keyword id="KW-0325">Glycoprotein</keyword>
<keyword id="KW-0333">Golgi apparatus</keyword>
<keyword id="KW-0472">Membrane</keyword>
<keyword id="KW-1185">Reference proteome</keyword>
<keyword id="KW-0735">Signal-anchor</keyword>
<keyword id="KW-0808">Transferase</keyword>
<keyword id="KW-0812">Transmembrane</keyword>
<keyword id="KW-1133">Transmembrane helix</keyword>
<comment type="function">
    <text evidence="2 6">Xylan acetyltransferase required for 2-O- and 3-O-monoacetylation of xylosyl residues in xylan (PubMed:29569182). Catalyzes the 2-O-acetylation of xylan, followed by nonenzymatic acetyl migration to the O-3 position, resulting in products that are monoacetylated at both O-2 and O-3 positions (By similarity).</text>
</comment>
<comment type="biophysicochemical properties">
    <kinetics>
        <KM evidence="6">1.7 mM for xylohexaose</KM>
        <Vmax evidence="6">26.2 pmol/min/mg enzyme with xylohexaose as substrate</Vmax>
    </kinetics>
</comment>
<comment type="subcellular location">
    <subcellularLocation>
        <location evidence="1">Golgi apparatus membrane</location>
        <topology evidence="3">Single-pass type II membrane protein</topology>
    </subcellularLocation>
</comment>
<comment type="similarity">
    <text evidence="9">Belongs to the PC-esterase family. TBL subfamily.</text>
</comment>